<sequence length="97" mass="10484">ATYKVKLVTPDGPVEFDCPDDVYILDRAEEEGHDLPYSCRAGSCSSCAGKVTAGTVDQSDGNYLDDDQMAEGFVLTCVAYPQSDVTIETHKEEELTG</sequence>
<keyword id="KW-0001">2Fe-2S</keyword>
<keyword id="KW-0150">Chloroplast</keyword>
<keyword id="KW-0903">Direct protein sequencing</keyword>
<keyword id="KW-0249">Electron transport</keyword>
<keyword id="KW-0408">Iron</keyword>
<keyword id="KW-0411">Iron-sulfur</keyword>
<keyword id="KW-0479">Metal-binding</keyword>
<keyword id="KW-0934">Plastid</keyword>
<keyword id="KW-0813">Transport</keyword>
<organism>
    <name type="scientific">Datura metel</name>
    <name type="common">Devil's trumpet</name>
    <name type="synonym">Datura fastuosa</name>
    <dbReference type="NCBI Taxonomy" id="35625"/>
    <lineage>
        <taxon>Eukaryota</taxon>
        <taxon>Viridiplantae</taxon>
        <taxon>Streptophyta</taxon>
        <taxon>Embryophyta</taxon>
        <taxon>Tracheophyta</taxon>
        <taxon>Spermatophyta</taxon>
        <taxon>Magnoliopsida</taxon>
        <taxon>eudicotyledons</taxon>
        <taxon>Gunneridae</taxon>
        <taxon>Pentapetalae</taxon>
        <taxon>asterids</taxon>
        <taxon>lamiids</taxon>
        <taxon>Solanales</taxon>
        <taxon>Solanaceae</taxon>
        <taxon>Solanoideae</taxon>
        <taxon>Datureae</taxon>
        <taxon>Datura</taxon>
    </lineage>
</organism>
<reference key="1">
    <citation type="journal article" date="1994" name="Phytochemistry">
        <title>Identical amino acid sequence of ferredoxin from Datura metel and D. innoxia.</title>
        <authorList>
            <person name="Mino Y."/>
        </authorList>
    </citation>
    <scope>PROTEIN SEQUENCE</scope>
    <scope>FUNCTION</scope>
    <scope>COFACTOR</scope>
    <scope>SUBCELLULAR LOCATION</scope>
    <source>
        <tissue>Leaf</tissue>
    </source>
</reference>
<reference key="2">
    <citation type="journal article" date="1995" name="Chem. Pharm. Bull.">
        <title>Protein chemotaxonomy of genus Datura. IV. Amino acid sequence of Datura ferredoxins depends not on the species but the section of Datura plants from which it comes.</title>
        <authorList>
            <person name="Mino Y."/>
        </authorList>
    </citation>
    <scope>PROTEIN SEQUENCE</scope>
    <scope>FUNCTION</scope>
    <scope>COFACTOR</scope>
    <scope>SUBCELLULAR LOCATION</scope>
    <source>
        <tissue>Leaf</tissue>
    </source>
</reference>
<feature type="chain" id="PRO_0000189323" description="Ferredoxin">
    <location>
        <begin position="1"/>
        <end position="97"/>
    </location>
</feature>
<feature type="domain" description="2Fe-2S ferredoxin-type" evidence="1">
    <location>
        <begin position="3"/>
        <end position="93"/>
    </location>
</feature>
<feature type="binding site" evidence="1">
    <location>
        <position position="39"/>
    </location>
    <ligand>
        <name>[2Fe-2S] cluster</name>
        <dbReference type="ChEBI" id="CHEBI:190135"/>
    </ligand>
</feature>
<feature type="binding site" evidence="1">
    <location>
        <position position="44"/>
    </location>
    <ligand>
        <name>[2Fe-2S] cluster</name>
        <dbReference type="ChEBI" id="CHEBI:190135"/>
    </ligand>
</feature>
<feature type="binding site" evidence="1">
    <location>
        <position position="47"/>
    </location>
    <ligand>
        <name>[2Fe-2S] cluster</name>
        <dbReference type="ChEBI" id="CHEBI:190135"/>
    </ligand>
</feature>
<feature type="binding site" evidence="1">
    <location>
        <position position="77"/>
    </location>
    <ligand>
        <name>[2Fe-2S] cluster</name>
        <dbReference type="ChEBI" id="CHEBI:190135"/>
    </ligand>
</feature>
<feature type="sequence conflict" description="In Ref. 2; AA sequence." evidence="4" ref="2">
    <original>D</original>
    <variation>N</variation>
    <location>
        <position position="17"/>
    </location>
</feature>
<feature type="sequence conflict" description="In Ref. 2; AA sequence." evidence="4" ref="2">
    <original>R</original>
    <variation>Q</variation>
    <location>
        <position position="27"/>
    </location>
</feature>
<feature type="sequence conflict" description="In Ref. 2; AA sequence." evidence="4" ref="2">
    <original>E</original>
    <variation>D</variation>
    <location>
        <position position="71"/>
    </location>
</feature>
<name>FER_DATME</name>
<proteinExistence type="evidence at protein level"/>
<protein>
    <recommendedName>
        <fullName>Ferredoxin</fullName>
    </recommendedName>
</protein>
<dbReference type="SMR" id="P68164"/>
<dbReference type="GO" id="GO:0009507">
    <property type="term" value="C:chloroplast"/>
    <property type="evidence" value="ECO:0000304"/>
    <property type="project" value="UniProtKB"/>
</dbReference>
<dbReference type="GO" id="GO:0009570">
    <property type="term" value="C:chloroplast stroma"/>
    <property type="evidence" value="ECO:0007669"/>
    <property type="project" value="TreeGrafter"/>
</dbReference>
<dbReference type="GO" id="GO:0051537">
    <property type="term" value="F:2 iron, 2 sulfur cluster binding"/>
    <property type="evidence" value="ECO:0007669"/>
    <property type="project" value="UniProtKB-KW"/>
</dbReference>
<dbReference type="GO" id="GO:0009055">
    <property type="term" value="F:electron transfer activity"/>
    <property type="evidence" value="ECO:0000304"/>
    <property type="project" value="UniProtKB"/>
</dbReference>
<dbReference type="GO" id="GO:0008198">
    <property type="term" value="F:ferrous iron binding"/>
    <property type="evidence" value="ECO:0000304"/>
    <property type="project" value="UniProtKB"/>
</dbReference>
<dbReference type="GO" id="GO:0022900">
    <property type="term" value="P:electron transport chain"/>
    <property type="evidence" value="ECO:0007669"/>
    <property type="project" value="InterPro"/>
</dbReference>
<dbReference type="GO" id="GO:0006124">
    <property type="term" value="P:ferredoxin metabolic process"/>
    <property type="evidence" value="ECO:0000304"/>
    <property type="project" value="UniProtKB"/>
</dbReference>
<dbReference type="CDD" id="cd00207">
    <property type="entry name" value="fer2"/>
    <property type="match status" value="1"/>
</dbReference>
<dbReference type="FunFam" id="3.10.20.30:FF:000014">
    <property type="entry name" value="Ferredoxin"/>
    <property type="match status" value="1"/>
</dbReference>
<dbReference type="Gene3D" id="3.10.20.30">
    <property type="match status" value="1"/>
</dbReference>
<dbReference type="InterPro" id="IPR036010">
    <property type="entry name" value="2Fe-2S_ferredoxin-like_sf"/>
</dbReference>
<dbReference type="InterPro" id="IPR001041">
    <property type="entry name" value="2Fe-2S_ferredoxin-type"/>
</dbReference>
<dbReference type="InterPro" id="IPR006058">
    <property type="entry name" value="2Fe2S_fd_BS"/>
</dbReference>
<dbReference type="InterPro" id="IPR012675">
    <property type="entry name" value="Beta-grasp_dom_sf"/>
</dbReference>
<dbReference type="InterPro" id="IPR010241">
    <property type="entry name" value="Fd_pln"/>
</dbReference>
<dbReference type="NCBIfam" id="TIGR02008">
    <property type="entry name" value="fdx_plant"/>
    <property type="match status" value="1"/>
</dbReference>
<dbReference type="PANTHER" id="PTHR43112">
    <property type="entry name" value="FERREDOXIN"/>
    <property type="match status" value="1"/>
</dbReference>
<dbReference type="PANTHER" id="PTHR43112:SF3">
    <property type="entry name" value="FERREDOXIN-2, CHLOROPLASTIC"/>
    <property type="match status" value="1"/>
</dbReference>
<dbReference type="Pfam" id="PF00111">
    <property type="entry name" value="Fer2"/>
    <property type="match status" value="1"/>
</dbReference>
<dbReference type="SUPFAM" id="SSF54292">
    <property type="entry name" value="2Fe-2S ferredoxin-like"/>
    <property type="match status" value="1"/>
</dbReference>
<dbReference type="PROSITE" id="PS00197">
    <property type="entry name" value="2FE2S_FER_1"/>
    <property type="match status" value="1"/>
</dbReference>
<dbReference type="PROSITE" id="PS51085">
    <property type="entry name" value="2FE2S_FER_2"/>
    <property type="match status" value="1"/>
</dbReference>
<evidence type="ECO:0000255" key="1">
    <source>
        <dbReference type="PROSITE-ProRule" id="PRU00465"/>
    </source>
</evidence>
<evidence type="ECO:0000269" key="2">
    <source>
    </source>
</evidence>
<evidence type="ECO:0000269" key="3">
    <source>
    </source>
</evidence>
<evidence type="ECO:0000305" key="4"/>
<comment type="function">
    <text evidence="2 3">Ferredoxins are iron-sulfur proteins that transfer electrons in a wide variety of metabolic reactions.</text>
</comment>
<comment type="cofactor">
    <cofactor evidence="2 3">
        <name>[2Fe-2S] cluster</name>
        <dbReference type="ChEBI" id="CHEBI:190135"/>
    </cofactor>
    <text evidence="2 3">Binds 1 [2Fe-2S] cluster.</text>
</comment>
<comment type="subcellular location">
    <subcellularLocation>
        <location evidence="2 3">Plastid</location>
        <location evidence="2 3">Chloroplast</location>
    </subcellularLocation>
</comment>
<comment type="similarity">
    <text evidence="4">Belongs to the 2Fe2S plant-type ferredoxin family.</text>
</comment>
<accession>P68164</accession>
<accession>P68167</accession>
<accession>P81454</accession>
<accession>P83521</accession>